<name>FEN1_SORMK</name>
<organism>
    <name type="scientific">Sordaria macrospora (strain ATCC MYA-333 / DSM 997 / K(L3346) / K-hell)</name>
    <dbReference type="NCBI Taxonomy" id="771870"/>
    <lineage>
        <taxon>Eukaryota</taxon>
        <taxon>Fungi</taxon>
        <taxon>Dikarya</taxon>
        <taxon>Ascomycota</taxon>
        <taxon>Pezizomycotina</taxon>
        <taxon>Sordariomycetes</taxon>
        <taxon>Sordariomycetidae</taxon>
        <taxon>Sordariales</taxon>
        <taxon>Sordariaceae</taxon>
        <taxon>Sordaria</taxon>
    </lineage>
</organism>
<reference key="1">
    <citation type="journal article" date="2010" name="PLoS Genet.">
        <title>De novo assembly of a 40 Mb eukaryotic genome from short sequence reads: Sordaria macrospora, a model organism for fungal morphogenesis.</title>
        <authorList>
            <person name="Nowrousian M."/>
            <person name="Stajich J.E."/>
            <person name="Chu M."/>
            <person name="Engh I."/>
            <person name="Espagne E."/>
            <person name="Halliday K."/>
            <person name="Kamerewerd J."/>
            <person name="Kempken F."/>
            <person name="Knab B."/>
            <person name="Kuo H.-C."/>
            <person name="Osiewacz H.D."/>
            <person name="Poeggeler S."/>
            <person name="Read N.D."/>
            <person name="Seiler S."/>
            <person name="Smith K.M."/>
            <person name="Zickler D."/>
            <person name="Kueck U."/>
            <person name="Freitag M."/>
        </authorList>
    </citation>
    <scope>NUCLEOTIDE SEQUENCE [LARGE SCALE GENOMIC DNA]</scope>
    <source>
        <strain>ATCC MYA-333 / DSM 997 / K(L3346) / K-hell</strain>
    </source>
</reference>
<evidence type="ECO:0000255" key="1">
    <source>
        <dbReference type="HAMAP-Rule" id="MF_03140"/>
    </source>
</evidence>
<evidence type="ECO:0000256" key="2">
    <source>
        <dbReference type="SAM" id="MobiDB-lite"/>
    </source>
</evidence>
<proteinExistence type="inferred from homology"/>
<feature type="chain" id="PRO_0000403601" description="Flap endonuclease 1">
    <location>
        <begin position="1"/>
        <end position="394"/>
    </location>
</feature>
<feature type="region of interest" description="N-domain">
    <location>
        <begin position="1"/>
        <end position="104"/>
    </location>
</feature>
<feature type="region of interest" description="I-domain">
    <location>
        <begin position="122"/>
        <end position="253"/>
    </location>
</feature>
<feature type="region of interest" description="Interaction with PCNA" evidence="1">
    <location>
        <begin position="341"/>
        <end position="349"/>
    </location>
</feature>
<feature type="region of interest" description="Disordered" evidence="2">
    <location>
        <begin position="356"/>
        <end position="394"/>
    </location>
</feature>
<feature type="compositionally biased region" description="Basic and acidic residues" evidence="2">
    <location>
        <begin position="356"/>
        <end position="383"/>
    </location>
</feature>
<feature type="compositionally biased region" description="Basic residues" evidence="2">
    <location>
        <begin position="384"/>
        <end position="394"/>
    </location>
</feature>
<feature type="binding site" evidence="1">
    <location>
        <position position="34"/>
    </location>
    <ligand>
        <name>Mg(2+)</name>
        <dbReference type="ChEBI" id="CHEBI:18420"/>
        <label>1</label>
    </ligand>
</feature>
<feature type="binding site" evidence="1">
    <location>
        <position position="47"/>
    </location>
    <ligand>
        <name>DNA</name>
        <dbReference type="ChEBI" id="CHEBI:16991"/>
    </ligand>
</feature>
<feature type="binding site" evidence="1">
    <location>
        <position position="70"/>
    </location>
    <ligand>
        <name>DNA</name>
        <dbReference type="ChEBI" id="CHEBI:16991"/>
    </ligand>
</feature>
<feature type="binding site" evidence="1">
    <location>
        <position position="86"/>
    </location>
    <ligand>
        <name>Mg(2+)</name>
        <dbReference type="ChEBI" id="CHEBI:18420"/>
        <label>1</label>
    </ligand>
</feature>
<feature type="binding site" evidence="1">
    <location>
        <position position="158"/>
    </location>
    <ligand>
        <name>DNA</name>
        <dbReference type="ChEBI" id="CHEBI:16991"/>
    </ligand>
</feature>
<feature type="binding site" evidence="1">
    <location>
        <position position="158"/>
    </location>
    <ligand>
        <name>Mg(2+)</name>
        <dbReference type="ChEBI" id="CHEBI:18420"/>
        <label>1</label>
    </ligand>
</feature>
<feature type="binding site" evidence="1">
    <location>
        <position position="160"/>
    </location>
    <ligand>
        <name>Mg(2+)</name>
        <dbReference type="ChEBI" id="CHEBI:18420"/>
        <label>1</label>
    </ligand>
</feature>
<feature type="binding site" evidence="1">
    <location>
        <position position="179"/>
    </location>
    <ligand>
        <name>Mg(2+)</name>
        <dbReference type="ChEBI" id="CHEBI:18420"/>
        <label>2</label>
    </ligand>
</feature>
<feature type="binding site" evidence="1">
    <location>
        <position position="181"/>
    </location>
    <ligand>
        <name>Mg(2+)</name>
        <dbReference type="ChEBI" id="CHEBI:18420"/>
        <label>2</label>
    </ligand>
</feature>
<feature type="binding site" evidence="1">
    <location>
        <position position="231"/>
    </location>
    <ligand>
        <name>DNA</name>
        <dbReference type="ChEBI" id="CHEBI:16991"/>
    </ligand>
</feature>
<feature type="binding site" evidence="1">
    <location>
        <position position="233"/>
    </location>
    <ligand>
        <name>DNA</name>
        <dbReference type="ChEBI" id="CHEBI:16991"/>
    </ligand>
</feature>
<feature type="binding site" evidence="1">
    <location>
        <position position="233"/>
    </location>
    <ligand>
        <name>Mg(2+)</name>
        <dbReference type="ChEBI" id="CHEBI:18420"/>
        <label>2</label>
    </ligand>
</feature>
<comment type="function">
    <text evidence="1">Structure-specific nuclease with 5'-flap endonuclease and 5'-3' exonuclease activities involved in DNA replication and repair. During DNA replication, cleaves the 5'-overhanging flap structure that is generated by displacement synthesis when DNA polymerase encounters the 5'-end of a downstream Okazaki fragment. It enters the flap from the 5'-end and then tracks to cleave the flap base, leaving a nick for ligation. Also involved in the long patch base excision repair (LP-BER) pathway, by cleaving within the apurinic/apyrimidinic (AP) site-terminated flap. Acts as a genome stabilization factor that prevents flaps from equilibrating into structures that lead to duplications and deletions. Also possesses 5'-3' exonuclease activity on nicked or gapped double-stranded DNA, and exhibits RNase H activity. Also involved in replication and repair of rDNA and in repairing mitochondrial DNA.</text>
</comment>
<comment type="cofactor">
    <cofactor evidence="1">
        <name>Mg(2+)</name>
        <dbReference type="ChEBI" id="CHEBI:18420"/>
    </cofactor>
    <text evidence="1">Binds 2 magnesium ions per subunit. They probably participate in the reaction catalyzed by the enzyme. May bind an additional third magnesium ion after substrate binding.</text>
</comment>
<comment type="subunit">
    <text evidence="1">Interacts with PCNA. Three molecules of FEN1 bind to one PCNA trimer with each molecule binding to one PCNA monomer. PCNA stimulates the nuclease activity without altering cleavage specificity.</text>
</comment>
<comment type="subcellular location">
    <subcellularLocation>
        <location evidence="1">Nucleus</location>
        <location evidence="1">Nucleolus</location>
    </subcellularLocation>
    <subcellularLocation>
        <location evidence="1">Nucleus</location>
        <location evidence="1">Nucleoplasm</location>
    </subcellularLocation>
    <subcellularLocation>
        <location evidence="1">Mitochondrion</location>
    </subcellularLocation>
    <text evidence="1">Resides mostly in the nucleoli and relocalizes to the nucleoplasm upon DNA damage.</text>
</comment>
<comment type="PTM">
    <text evidence="1">Phosphorylated. Phosphorylation upon DNA damage induces relocalization to the nuclear plasma.</text>
</comment>
<comment type="similarity">
    <text evidence="1">Belongs to the XPG/RAD2 endonuclease family. FEN1 subfamily.</text>
</comment>
<keyword id="KW-0227">DNA damage</keyword>
<keyword id="KW-0234">DNA repair</keyword>
<keyword id="KW-0235">DNA replication</keyword>
<keyword id="KW-0255">Endonuclease</keyword>
<keyword id="KW-0269">Exonuclease</keyword>
<keyword id="KW-0378">Hydrolase</keyword>
<keyword id="KW-0460">Magnesium</keyword>
<keyword id="KW-0479">Metal-binding</keyword>
<keyword id="KW-0496">Mitochondrion</keyword>
<keyword id="KW-0540">Nuclease</keyword>
<keyword id="KW-0539">Nucleus</keyword>
<keyword id="KW-0597">Phosphoprotein</keyword>
<keyword id="KW-1185">Reference proteome</keyword>
<gene>
    <name evidence="1" type="primary">FEN1</name>
    <name type="ORF">SMAC_08742</name>
</gene>
<protein>
    <recommendedName>
        <fullName evidence="1">Flap endonuclease 1</fullName>
        <shortName evidence="1">FEN-1</shortName>
        <ecNumber evidence="1">3.1.-.-</ecNumber>
    </recommendedName>
    <alternativeName>
        <fullName evidence="1">Flap structure-specific endonuclease 1</fullName>
    </alternativeName>
</protein>
<dbReference type="EC" id="3.1.-.-" evidence="1"/>
<dbReference type="EMBL" id="CABT02000064">
    <property type="protein sequence ID" value="CCC05373.1"/>
    <property type="molecule type" value="Genomic_DNA"/>
</dbReference>
<dbReference type="RefSeq" id="XP_003344492.1">
    <property type="nucleotide sequence ID" value="XM_003344444.1"/>
</dbReference>
<dbReference type="SMR" id="D1ZT73"/>
<dbReference type="FunCoup" id="D1ZT73">
    <property type="interactions" value="996"/>
</dbReference>
<dbReference type="STRING" id="771870.D1ZT73"/>
<dbReference type="VEuPathDB" id="FungiDB:SMAC_08742"/>
<dbReference type="eggNOG" id="KOG2519">
    <property type="taxonomic scope" value="Eukaryota"/>
</dbReference>
<dbReference type="HOGENOM" id="CLU_032444_1_1_1"/>
<dbReference type="InParanoid" id="D1ZT73"/>
<dbReference type="OMA" id="MGIPWVQ"/>
<dbReference type="OrthoDB" id="1937206at2759"/>
<dbReference type="Proteomes" id="UP000001881">
    <property type="component" value="Unassembled WGS sequence"/>
</dbReference>
<dbReference type="GO" id="GO:0005739">
    <property type="term" value="C:mitochondrion"/>
    <property type="evidence" value="ECO:0007669"/>
    <property type="project" value="UniProtKB-SubCell"/>
</dbReference>
<dbReference type="GO" id="GO:0005730">
    <property type="term" value="C:nucleolus"/>
    <property type="evidence" value="ECO:0007669"/>
    <property type="project" value="UniProtKB-SubCell"/>
</dbReference>
<dbReference type="GO" id="GO:0005654">
    <property type="term" value="C:nucleoplasm"/>
    <property type="evidence" value="ECO:0007669"/>
    <property type="project" value="UniProtKB-SubCell"/>
</dbReference>
<dbReference type="GO" id="GO:0008409">
    <property type="term" value="F:5'-3' exonuclease activity"/>
    <property type="evidence" value="ECO:0007669"/>
    <property type="project" value="UniProtKB-UniRule"/>
</dbReference>
<dbReference type="GO" id="GO:0017108">
    <property type="term" value="F:5'-flap endonuclease activity"/>
    <property type="evidence" value="ECO:0007669"/>
    <property type="project" value="UniProtKB-UniRule"/>
</dbReference>
<dbReference type="GO" id="GO:0003677">
    <property type="term" value="F:DNA binding"/>
    <property type="evidence" value="ECO:0007669"/>
    <property type="project" value="UniProtKB-UniRule"/>
</dbReference>
<dbReference type="GO" id="GO:0000287">
    <property type="term" value="F:magnesium ion binding"/>
    <property type="evidence" value="ECO:0007669"/>
    <property type="project" value="UniProtKB-UniRule"/>
</dbReference>
<dbReference type="GO" id="GO:0006284">
    <property type="term" value="P:base-excision repair"/>
    <property type="evidence" value="ECO:0007669"/>
    <property type="project" value="UniProtKB-UniRule"/>
</dbReference>
<dbReference type="GO" id="GO:0043137">
    <property type="term" value="P:DNA replication, removal of RNA primer"/>
    <property type="evidence" value="ECO:0007669"/>
    <property type="project" value="UniProtKB-UniRule"/>
</dbReference>
<dbReference type="CDD" id="cd09907">
    <property type="entry name" value="H3TH_FEN1-Euk"/>
    <property type="match status" value="1"/>
</dbReference>
<dbReference type="CDD" id="cd09867">
    <property type="entry name" value="PIN_FEN1"/>
    <property type="match status" value="1"/>
</dbReference>
<dbReference type="FunFam" id="1.10.150.20:FF:000009">
    <property type="entry name" value="Flap endonuclease 1"/>
    <property type="match status" value="1"/>
</dbReference>
<dbReference type="FunFam" id="3.40.50.1010:FF:000003">
    <property type="entry name" value="Flap endonuclease 1"/>
    <property type="match status" value="1"/>
</dbReference>
<dbReference type="Gene3D" id="1.10.150.20">
    <property type="entry name" value="5' to 3' exonuclease, C-terminal subdomain"/>
    <property type="match status" value="1"/>
</dbReference>
<dbReference type="Gene3D" id="3.40.50.1010">
    <property type="entry name" value="5'-nuclease"/>
    <property type="match status" value="1"/>
</dbReference>
<dbReference type="HAMAP" id="MF_00614">
    <property type="entry name" value="Fen"/>
    <property type="match status" value="1"/>
</dbReference>
<dbReference type="InterPro" id="IPR036279">
    <property type="entry name" value="5-3_exonuclease_C_sf"/>
</dbReference>
<dbReference type="InterPro" id="IPR023426">
    <property type="entry name" value="Flap_endonuc"/>
</dbReference>
<dbReference type="InterPro" id="IPR008918">
    <property type="entry name" value="HhH2"/>
</dbReference>
<dbReference type="InterPro" id="IPR029060">
    <property type="entry name" value="PIN-like_dom_sf"/>
</dbReference>
<dbReference type="InterPro" id="IPR006086">
    <property type="entry name" value="XPG-I_dom"/>
</dbReference>
<dbReference type="InterPro" id="IPR006084">
    <property type="entry name" value="XPG/Rad2"/>
</dbReference>
<dbReference type="InterPro" id="IPR019974">
    <property type="entry name" value="XPG_CS"/>
</dbReference>
<dbReference type="InterPro" id="IPR006085">
    <property type="entry name" value="XPG_DNA_repair_N"/>
</dbReference>
<dbReference type="PANTHER" id="PTHR11081:SF9">
    <property type="entry name" value="FLAP ENDONUCLEASE 1"/>
    <property type="match status" value="1"/>
</dbReference>
<dbReference type="PANTHER" id="PTHR11081">
    <property type="entry name" value="FLAP ENDONUCLEASE FAMILY MEMBER"/>
    <property type="match status" value="1"/>
</dbReference>
<dbReference type="Pfam" id="PF00867">
    <property type="entry name" value="XPG_I"/>
    <property type="match status" value="1"/>
</dbReference>
<dbReference type="Pfam" id="PF00752">
    <property type="entry name" value="XPG_N"/>
    <property type="match status" value="1"/>
</dbReference>
<dbReference type="PRINTS" id="PR00853">
    <property type="entry name" value="XPGRADSUPER"/>
</dbReference>
<dbReference type="SMART" id="SM00279">
    <property type="entry name" value="HhH2"/>
    <property type="match status" value="1"/>
</dbReference>
<dbReference type="SMART" id="SM00484">
    <property type="entry name" value="XPGI"/>
    <property type="match status" value="1"/>
</dbReference>
<dbReference type="SMART" id="SM00485">
    <property type="entry name" value="XPGN"/>
    <property type="match status" value="1"/>
</dbReference>
<dbReference type="SUPFAM" id="SSF47807">
    <property type="entry name" value="5' to 3' exonuclease, C-terminal subdomain"/>
    <property type="match status" value="1"/>
</dbReference>
<dbReference type="SUPFAM" id="SSF88723">
    <property type="entry name" value="PIN domain-like"/>
    <property type="match status" value="1"/>
</dbReference>
<dbReference type="PROSITE" id="PS00841">
    <property type="entry name" value="XPG_1"/>
    <property type="match status" value="1"/>
</dbReference>
<dbReference type="PROSITE" id="PS00842">
    <property type="entry name" value="XPG_2"/>
    <property type="match status" value="1"/>
</dbReference>
<accession>D1ZT73</accession>
<accession>F7WAR4</accession>
<sequence length="394" mass="44836">MGIKQLFSIIKDEAPAAIKEGDIKNQFGRKVAIDASMSIYSFLIAVRSDGQQLMNEAGETTSHLMGMFYRTLRMVDNGIKPLYVFDGAPPKLKSGELAKRFQRKQEATEGLEEAKETGTAEDVEKFSRRTVRVTREHNAECQKLLKLMGIPYIVAPTEAEAQCAVLARAGKVYAAASEDMDTLCFHTPILLRHLTFSEQRKEPIQEIHTDKVLEGLGMDRKQFVDLCILLGCDYLDPIPKVGPSTALKLIREHGTLEEVVEWMKADPKGRYQIPEDWPFEDARALFFEPDVRPADDPLCDFKWEKPDIEGLVQFLAHEKGFSEDRVRSASIKLQKNMQTSQQARIEGFFKVLPKTEEEKKAHKRKLEEQAEQKRKKVKEEKKEKAKLKAKPRGA</sequence>